<dbReference type="EMBL" id="CP000813">
    <property type="protein sequence ID" value="ABV62084.1"/>
    <property type="molecule type" value="Genomic_DNA"/>
</dbReference>
<dbReference type="RefSeq" id="WP_008354700.1">
    <property type="nucleotide sequence ID" value="NZ_VEIS01000003.1"/>
</dbReference>
<dbReference type="SMR" id="A8FCW7"/>
<dbReference type="STRING" id="315750.BPUM_1401"/>
<dbReference type="GeneID" id="66362999"/>
<dbReference type="KEGG" id="bpu:BPUM_1401"/>
<dbReference type="eggNOG" id="COG0333">
    <property type="taxonomic scope" value="Bacteria"/>
</dbReference>
<dbReference type="HOGENOM" id="CLU_129084_1_3_9"/>
<dbReference type="OrthoDB" id="9812874at2"/>
<dbReference type="Proteomes" id="UP000001355">
    <property type="component" value="Chromosome"/>
</dbReference>
<dbReference type="GO" id="GO:0015934">
    <property type="term" value="C:large ribosomal subunit"/>
    <property type="evidence" value="ECO:0007669"/>
    <property type="project" value="InterPro"/>
</dbReference>
<dbReference type="GO" id="GO:0003735">
    <property type="term" value="F:structural constituent of ribosome"/>
    <property type="evidence" value="ECO:0007669"/>
    <property type="project" value="InterPro"/>
</dbReference>
<dbReference type="GO" id="GO:0006412">
    <property type="term" value="P:translation"/>
    <property type="evidence" value="ECO:0007669"/>
    <property type="project" value="UniProtKB-UniRule"/>
</dbReference>
<dbReference type="HAMAP" id="MF_00340">
    <property type="entry name" value="Ribosomal_bL32"/>
    <property type="match status" value="1"/>
</dbReference>
<dbReference type="InterPro" id="IPR002677">
    <property type="entry name" value="Ribosomal_bL32"/>
</dbReference>
<dbReference type="InterPro" id="IPR044957">
    <property type="entry name" value="Ribosomal_bL32_bact"/>
</dbReference>
<dbReference type="InterPro" id="IPR011332">
    <property type="entry name" value="Ribosomal_zn-bd"/>
</dbReference>
<dbReference type="NCBIfam" id="TIGR01031">
    <property type="entry name" value="rpmF_bact"/>
    <property type="match status" value="1"/>
</dbReference>
<dbReference type="PANTHER" id="PTHR35534">
    <property type="entry name" value="50S RIBOSOMAL PROTEIN L32"/>
    <property type="match status" value="1"/>
</dbReference>
<dbReference type="PANTHER" id="PTHR35534:SF2">
    <property type="entry name" value="LARGE RIBOSOMAL SUBUNIT PROTEIN BL32"/>
    <property type="match status" value="1"/>
</dbReference>
<dbReference type="Pfam" id="PF01783">
    <property type="entry name" value="Ribosomal_L32p"/>
    <property type="match status" value="1"/>
</dbReference>
<dbReference type="SUPFAM" id="SSF57829">
    <property type="entry name" value="Zn-binding ribosomal proteins"/>
    <property type="match status" value="1"/>
</dbReference>
<organism>
    <name type="scientific">Bacillus pumilus (strain SAFR-032)</name>
    <dbReference type="NCBI Taxonomy" id="315750"/>
    <lineage>
        <taxon>Bacteria</taxon>
        <taxon>Bacillati</taxon>
        <taxon>Bacillota</taxon>
        <taxon>Bacilli</taxon>
        <taxon>Bacillales</taxon>
        <taxon>Bacillaceae</taxon>
        <taxon>Bacillus</taxon>
    </lineage>
</organism>
<gene>
    <name evidence="1" type="primary">rpmF</name>
    <name type="ordered locus">BPUM_1401</name>
</gene>
<sequence length="57" mass="6542">MAVPFRRTSKMKKRLRRTHFKLQVPGMVACPECGEMKISHRVCKSCGTYKGKDVKSN</sequence>
<keyword id="KW-0687">Ribonucleoprotein</keyword>
<keyword id="KW-0689">Ribosomal protein</keyword>
<protein>
    <recommendedName>
        <fullName evidence="1">Large ribosomal subunit protein bL32</fullName>
    </recommendedName>
    <alternativeName>
        <fullName evidence="2">50S ribosomal protein L32</fullName>
    </alternativeName>
</protein>
<evidence type="ECO:0000255" key="1">
    <source>
        <dbReference type="HAMAP-Rule" id="MF_00340"/>
    </source>
</evidence>
<evidence type="ECO:0000305" key="2"/>
<reference key="1">
    <citation type="journal article" date="2007" name="PLoS ONE">
        <title>Paradoxical DNA repair and peroxide resistance gene conservation in Bacillus pumilus SAFR-032.</title>
        <authorList>
            <person name="Gioia J."/>
            <person name="Yerrapragada S."/>
            <person name="Qin X."/>
            <person name="Jiang H."/>
            <person name="Igboeli O.C."/>
            <person name="Muzny D."/>
            <person name="Dugan-Rocha S."/>
            <person name="Ding Y."/>
            <person name="Hawes A."/>
            <person name="Liu W."/>
            <person name="Perez L."/>
            <person name="Kovar C."/>
            <person name="Dinh H."/>
            <person name="Lee S."/>
            <person name="Nazareth L."/>
            <person name="Blyth P."/>
            <person name="Holder M."/>
            <person name="Buhay C."/>
            <person name="Tirumalai M.R."/>
            <person name="Liu Y."/>
            <person name="Dasgupta I."/>
            <person name="Bokhetache L."/>
            <person name="Fujita M."/>
            <person name="Karouia F."/>
            <person name="Eswara Moorthy P."/>
            <person name="Siefert J."/>
            <person name="Uzman A."/>
            <person name="Buzumbo P."/>
            <person name="Verma A."/>
            <person name="Zwiya H."/>
            <person name="McWilliams B.D."/>
            <person name="Olowu A."/>
            <person name="Clinkenbeard K.D."/>
            <person name="Newcombe D."/>
            <person name="Golebiewski L."/>
            <person name="Petrosino J.F."/>
            <person name="Nicholson W.L."/>
            <person name="Fox G.E."/>
            <person name="Venkateswaran K."/>
            <person name="Highlander S.K."/>
            <person name="Weinstock G.M."/>
        </authorList>
    </citation>
    <scope>NUCLEOTIDE SEQUENCE [LARGE SCALE GENOMIC DNA]</scope>
    <source>
        <strain>SAFR-032</strain>
    </source>
</reference>
<name>RL32_BACP2</name>
<comment type="similarity">
    <text evidence="1">Belongs to the bacterial ribosomal protein bL32 family.</text>
</comment>
<accession>A8FCW7</accession>
<feature type="chain" id="PRO_1000059818" description="Large ribosomal subunit protein bL32">
    <location>
        <begin position="1"/>
        <end position="57"/>
    </location>
</feature>
<proteinExistence type="inferred from homology"/>